<keyword id="KW-0597">Phosphoprotein</keyword>
<keyword id="KW-1185">Reference proteome</keyword>
<keyword id="KW-0677">Repeat</keyword>
<dbReference type="EMBL" id="AB169656">
    <property type="protein sequence ID" value="BAE01737.1"/>
    <property type="molecule type" value="mRNA"/>
</dbReference>
<dbReference type="SMR" id="Q4R588"/>
<dbReference type="STRING" id="9541.ENSMFAP00000026304"/>
<dbReference type="eggNOG" id="KOG2160">
    <property type="taxonomic scope" value="Eukaryota"/>
</dbReference>
<dbReference type="Proteomes" id="UP000233100">
    <property type="component" value="Unplaced"/>
</dbReference>
<dbReference type="GO" id="GO:0005783">
    <property type="term" value="C:endoplasmic reticulum"/>
    <property type="evidence" value="ECO:0007669"/>
    <property type="project" value="TreeGrafter"/>
</dbReference>
<dbReference type="GO" id="GO:0000774">
    <property type="term" value="F:adenyl-nucleotide exchange factor activity"/>
    <property type="evidence" value="ECO:0007669"/>
    <property type="project" value="TreeGrafter"/>
</dbReference>
<dbReference type="FunFam" id="1.25.10.10:FF:000178">
    <property type="entry name" value="hsp70-binding protein 1 isoform X1"/>
    <property type="match status" value="1"/>
</dbReference>
<dbReference type="Gene3D" id="1.25.10.10">
    <property type="entry name" value="Leucine-rich Repeat Variant"/>
    <property type="match status" value="1"/>
</dbReference>
<dbReference type="InterPro" id="IPR011989">
    <property type="entry name" value="ARM-like"/>
</dbReference>
<dbReference type="InterPro" id="IPR016024">
    <property type="entry name" value="ARM-type_fold"/>
</dbReference>
<dbReference type="InterPro" id="IPR050693">
    <property type="entry name" value="Hsp70_NEF-Inhibitors"/>
</dbReference>
<dbReference type="InterPro" id="IPR013918">
    <property type="entry name" value="Nucleotide_exch_fac_Fes1"/>
</dbReference>
<dbReference type="PANTHER" id="PTHR19316:SF18">
    <property type="entry name" value="HSP70-BINDING PROTEIN 1"/>
    <property type="match status" value="1"/>
</dbReference>
<dbReference type="PANTHER" id="PTHR19316">
    <property type="entry name" value="PROTEIN FOLDING REGULATOR"/>
    <property type="match status" value="1"/>
</dbReference>
<dbReference type="Pfam" id="PF08609">
    <property type="entry name" value="Fes1"/>
    <property type="match status" value="1"/>
</dbReference>
<dbReference type="SUPFAM" id="SSF48371">
    <property type="entry name" value="ARM repeat"/>
    <property type="match status" value="1"/>
</dbReference>
<protein>
    <recommendedName>
        <fullName>Hsp70-binding protein 1</fullName>
        <shortName>HspBP1</shortName>
    </recommendedName>
    <alternativeName>
        <fullName>Heat shock protein-binding protein 1</fullName>
    </alternativeName>
    <alternativeName>
        <fullName>Hsp70-interacting protein 1</fullName>
    </alternativeName>
</protein>
<evidence type="ECO:0000250" key="1"/>
<evidence type="ECO:0000250" key="2">
    <source>
        <dbReference type="UniProtKB" id="Q9NZL4"/>
    </source>
</evidence>
<evidence type="ECO:0000256" key="3">
    <source>
        <dbReference type="SAM" id="MobiDB-lite"/>
    </source>
</evidence>
<reference key="1">
    <citation type="submission" date="2005-06" db="EMBL/GenBank/DDBJ databases">
        <title>DNA sequences of macaque genes expressed in brain or testis and its evolutionary implications.</title>
        <authorList>
            <consortium name="International consortium for macaque cDNA sequencing and analysis"/>
        </authorList>
    </citation>
    <scope>NUCLEOTIDE SEQUENCE [LARGE SCALE MRNA]</scope>
    <source>
        <tissue>Brain cortex</tissue>
    </source>
</reference>
<sequence>MSDEGSRGSRLPLALPPASQGCSSGGGGGGGGGGSSSAGGSGNPRPPRNLQGLLQMAITAGSEEPDPPPEPMSEERRQWLQEAMSAAFRGQREEVEQMKSCLRVLSQPMPPTAGEAEQAADQQEREGALELLADLCENMDNAADFCQLSGMHLLVGRYLEAGAAGLRWRAAQLIGTCSQNVAAIQEQVLGLGALRKLLRLLDRDACDTVRVKALFAISCLVREQEAGLLQFLRLDGFSVLMRAMQQQVQKLKVKSAFLLQNLLVGHPEHRGTLCSMGMVQQLVALVRTEHSPFHEHVLGALCSLVTDFPQGVRECREPELGLEELLRHRCQLLQQHEEYQEELEFCEKLLQTCFSSPTDDSMDR</sequence>
<name>HPBP1_MACFA</name>
<gene>
    <name type="primary">HSPBP1</name>
    <name type="ORF">QccE-13919</name>
</gene>
<comment type="function">
    <text evidence="1">Inhibits HSPA1A chaperone activity by changing the conformation of the ATP-binding domain of HSPA1A and interfering with ATP binding. Interferes with ubiquitination mediated by STUB1 and inhibits chaperone-assisted degradation of target proteins (By similarity).</text>
</comment>
<comment type="subunit">
    <text evidence="1">Interacts with the ATP-binding domain of HSPA1A. Detected in a ternary complex containing STUB1, HSPA1A and HSPBP1 (By similarity). Interacts with PGLYRP1; this interaction blocks the cytotoxic activity of the PGLYRP1-HSPA1A complex (By similarity).</text>
</comment>
<proteinExistence type="evidence at transcript level"/>
<feature type="chain" id="PRO_0000084036" description="Hsp70-binding protein 1">
    <location>
        <begin position="1"/>
        <end position="364"/>
    </location>
</feature>
<feature type="repeat" description="ARM 1">
    <location>
        <begin position="137"/>
        <end position="179"/>
    </location>
</feature>
<feature type="repeat" description="ARM 2">
    <location>
        <begin position="182"/>
        <end position="222"/>
    </location>
</feature>
<feature type="repeat" description="ARM 3">
    <location>
        <begin position="225"/>
        <end position="264"/>
    </location>
</feature>
<feature type="repeat" description="ARM 4">
    <location>
        <begin position="267"/>
        <end position="306"/>
    </location>
</feature>
<feature type="region of interest" description="Disordered" evidence="3">
    <location>
        <begin position="1"/>
        <end position="75"/>
    </location>
</feature>
<feature type="compositionally biased region" description="Gly residues" evidence="3">
    <location>
        <begin position="23"/>
        <end position="42"/>
    </location>
</feature>
<feature type="modified residue" description="Phosphoserine" evidence="2">
    <location>
        <position position="356"/>
    </location>
</feature>
<feature type="modified residue" description="Phosphoserine" evidence="2">
    <location>
        <position position="361"/>
    </location>
</feature>
<accession>Q4R588</accession>
<organism>
    <name type="scientific">Macaca fascicularis</name>
    <name type="common">Crab-eating macaque</name>
    <name type="synonym">Cynomolgus monkey</name>
    <dbReference type="NCBI Taxonomy" id="9541"/>
    <lineage>
        <taxon>Eukaryota</taxon>
        <taxon>Metazoa</taxon>
        <taxon>Chordata</taxon>
        <taxon>Craniata</taxon>
        <taxon>Vertebrata</taxon>
        <taxon>Euteleostomi</taxon>
        <taxon>Mammalia</taxon>
        <taxon>Eutheria</taxon>
        <taxon>Euarchontoglires</taxon>
        <taxon>Primates</taxon>
        <taxon>Haplorrhini</taxon>
        <taxon>Catarrhini</taxon>
        <taxon>Cercopithecidae</taxon>
        <taxon>Cercopithecinae</taxon>
        <taxon>Macaca</taxon>
    </lineage>
</organism>